<keyword id="KW-0256">Endoplasmic reticulum</keyword>
<keyword id="KW-0378">Hydrolase</keyword>
<keyword id="KW-0472">Membrane</keyword>
<keyword id="KW-0589">Pheromone response</keyword>
<keyword id="KW-0645">Protease</keyword>
<keyword id="KW-1185">Reference proteome</keyword>
<keyword id="KW-0812">Transmembrane</keyword>
<keyword id="KW-1133">Transmembrane helix</keyword>
<gene>
    <name type="primary">RCE1</name>
    <name type="ordered locus">YMR274C</name>
    <name type="ORF">YM8156.16C</name>
</gene>
<proteinExistence type="evidence at protein level"/>
<name>RCE1_YEAST</name>
<protein>
    <recommendedName>
        <fullName>CAAX prenyl protease 2</fullName>
        <ecNumber evidence="3">3.4.26.1</ecNumber>
    </recommendedName>
    <alternativeName>
        <fullName>Prenyl protein-specific endoprotease 2</fullName>
        <shortName>PPSEP 2</shortName>
    </alternativeName>
    <alternativeName>
        <fullName>Ras and A-factor-converting enzyme</fullName>
        <shortName>RACE</shortName>
    </alternativeName>
</protein>
<dbReference type="EC" id="3.4.26.1" evidence="3"/>
<dbReference type="EMBL" id="Z49260">
    <property type="protein sequence ID" value="CAA89257.1"/>
    <property type="molecule type" value="Genomic_DNA"/>
</dbReference>
<dbReference type="EMBL" id="BK006946">
    <property type="protein sequence ID" value="DAA10175.1"/>
    <property type="molecule type" value="Genomic_DNA"/>
</dbReference>
<dbReference type="PIR" id="S54486">
    <property type="entry name" value="S54486"/>
</dbReference>
<dbReference type="RefSeq" id="NP_014001.1">
    <property type="nucleotide sequence ID" value="NM_001182781.1"/>
</dbReference>
<dbReference type="SMR" id="Q03530"/>
<dbReference type="BioGRID" id="35453">
    <property type="interactions" value="176"/>
</dbReference>
<dbReference type="DIP" id="DIP-7636N"/>
<dbReference type="FunCoup" id="Q03530">
    <property type="interactions" value="344"/>
</dbReference>
<dbReference type="STRING" id="4932.YMR274C"/>
<dbReference type="ChEMBL" id="CHEMBL1250413"/>
<dbReference type="DrugCentral" id="Q03530"/>
<dbReference type="MEROPS" id="G05.001"/>
<dbReference type="TCDB" id="9.B.1.2.1">
    <property type="family name" value="the integral membrane caax protease (caax protease) family"/>
</dbReference>
<dbReference type="PaxDb" id="4932-YMR274C"/>
<dbReference type="PeptideAtlas" id="Q03530"/>
<dbReference type="DNASU" id="855317"/>
<dbReference type="EnsemblFungi" id="YMR274C_mRNA">
    <property type="protein sequence ID" value="YMR274C"/>
    <property type="gene ID" value="YMR274C"/>
</dbReference>
<dbReference type="GeneID" id="855317"/>
<dbReference type="KEGG" id="sce:YMR274C"/>
<dbReference type="AGR" id="SGD:S000004887"/>
<dbReference type="SGD" id="S000004887">
    <property type="gene designation" value="RCE1"/>
</dbReference>
<dbReference type="VEuPathDB" id="FungiDB:YMR274C"/>
<dbReference type="eggNOG" id="KOG4130">
    <property type="taxonomic scope" value="Eukaryota"/>
</dbReference>
<dbReference type="GeneTree" id="ENSGT00390000004124"/>
<dbReference type="HOGENOM" id="CLU_049909_1_0_1"/>
<dbReference type="InParanoid" id="Q03530"/>
<dbReference type="OMA" id="HSFCNWC"/>
<dbReference type="OrthoDB" id="271604at2759"/>
<dbReference type="BioCyc" id="YEAST:G3O-32945-MONOMER"/>
<dbReference type="BRENDA" id="3.4.99.B1">
    <property type="organism ID" value="984"/>
</dbReference>
<dbReference type="Reactome" id="R-SCE-5689880">
    <property type="pathway name" value="Ub-specific processing proteases"/>
</dbReference>
<dbReference type="Reactome" id="R-SCE-9648002">
    <property type="pathway name" value="RAS processing"/>
</dbReference>
<dbReference type="BioGRID-ORCS" id="855317">
    <property type="hits" value="0 hits in 10 CRISPR screens"/>
</dbReference>
<dbReference type="PRO" id="PR:Q03530"/>
<dbReference type="Proteomes" id="UP000002311">
    <property type="component" value="Chromosome XIII"/>
</dbReference>
<dbReference type="RNAct" id="Q03530">
    <property type="molecule type" value="protein"/>
</dbReference>
<dbReference type="GO" id="GO:0005783">
    <property type="term" value="C:endoplasmic reticulum"/>
    <property type="evidence" value="ECO:0007005"/>
    <property type="project" value="SGD"/>
</dbReference>
<dbReference type="GO" id="GO:0005789">
    <property type="term" value="C:endoplasmic reticulum membrane"/>
    <property type="evidence" value="ECO:0000314"/>
    <property type="project" value="SGD"/>
</dbReference>
<dbReference type="GO" id="GO:0004222">
    <property type="term" value="F:metalloendopeptidase activity"/>
    <property type="evidence" value="ECO:0000314"/>
    <property type="project" value="SGD"/>
</dbReference>
<dbReference type="GO" id="GO:0071586">
    <property type="term" value="P:CAAX-box protein processing"/>
    <property type="evidence" value="ECO:0000315"/>
    <property type="project" value="SGD"/>
</dbReference>
<dbReference type="GO" id="GO:0071432">
    <property type="term" value="P:peptide mating pheromone maturation involved in positive regulation of conjugation with cellular fusion"/>
    <property type="evidence" value="ECO:0000315"/>
    <property type="project" value="SGD"/>
</dbReference>
<dbReference type="GO" id="GO:0019236">
    <property type="term" value="P:response to pheromone"/>
    <property type="evidence" value="ECO:0007669"/>
    <property type="project" value="UniProtKB-KW"/>
</dbReference>
<dbReference type="InterPro" id="IPR039731">
    <property type="entry name" value="Rce1"/>
</dbReference>
<dbReference type="InterPro" id="IPR003675">
    <property type="entry name" value="Rce1/LyrA-like_dom"/>
</dbReference>
<dbReference type="PANTHER" id="PTHR13046:SF0">
    <property type="entry name" value="CAAX PRENYL PROTEASE 2"/>
    <property type="match status" value="1"/>
</dbReference>
<dbReference type="PANTHER" id="PTHR13046">
    <property type="entry name" value="PROTEASE U48 CAAX PRENYL PROTEASE RCE1"/>
    <property type="match status" value="1"/>
</dbReference>
<dbReference type="Pfam" id="PF02517">
    <property type="entry name" value="Rce1-like"/>
    <property type="match status" value="1"/>
</dbReference>
<comment type="function">
    <text evidence="3 4">Protease involved in the processing of a variety of prenylated proteins containing the C-terminal CAAX motif, where C is a cysteine modified with an isoprenoid lipid, A is an aliphatic amino acid and X is any C-terminal amino acid. Proteolytically removes the C-terminal three residues of farnesylated proteins, leaving the prenylated cysteine as the new C-terminus. Target proteins include the a-factor mating pheromone and RAS. Its substrate specificity is overlapping but distinct with that of STE24.</text>
</comment>
<comment type="catalytic activity">
    <reaction evidence="3">
        <text>Hydrolyzes the peptide bond -P2-(S-farnesyl or geranylgeranyl)C-P1'-P2'-P3'-COOH where P1' and P2' are amino acids with aliphatic sidechains and P3' is any C-terminal residue.</text>
        <dbReference type="EC" id="3.4.26.1"/>
    </reaction>
</comment>
<comment type="subcellular location">
    <subcellularLocation>
        <location evidence="5">Endoplasmic reticulum membrane</location>
        <topology evidence="5">Multi-pass membrane protein</topology>
    </subcellularLocation>
</comment>
<comment type="similarity">
    <text evidence="6">Belongs to the peptidase U48 family.</text>
</comment>
<organism>
    <name type="scientific">Saccharomyces cerevisiae (strain ATCC 204508 / S288c)</name>
    <name type="common">Baker's yeast</name>
    <dbReference type="NCBI Taxonomy" id="559292"/>
    <lineage>
        <taxon>Eukaryota</taxon>
        <taxon>Fungi</taxon>
        <taxon>Dikarya</taxon>
        <taxon>Ascomycota</taxon>
        <taxon>Saccharomycotina</taxon>
        <taxon>Saccharomycetes</taxon>
        <taxon>Saccharomycetales</taxon>
        <taxon>Saccharomycetaceae</taxon>
        <taxon>Saccharomyces</taxon>
    </lineage>
</organism>
<evidence type="ECO:0000250" key="1">
    <source>
        <dbReference type="UniProtKB" id="Q6LZY8"/>
    </source>
</evidence>
<evidence type="ECO:0000255" key="2"/>
<evidence type="ECO:0000269" key="3">
    <source>
    </source>
</evidence>
<evidence type="ECO:0000269" key="4">
    <source>
    </source>
</evidence>
<evidence type="ECO:0000269" key="5">
    <source>
    </source>
</evidence>
<evidence type="ECO:0000305" key="6"/>
<sequence length="315" mass="35911">MLQFSTFLVLLYISISYVLPLYATSQPEGSKRDNPRTIKSRMQKLTIMLISNLFLVPFLQSQLSSTTSHISFKDAFLGLGIIPGYYAALPNPWQFSQFVKDLTKCVAMLLTLYCGPVLDFVLYHLLNPKSSILEDFYHEFLNIWSFRNFIFAPITEEIFYTSMLLTTYLNLIPHSQLSYQQLFWQPSLFFGLAHAHHAYEQLQEGSMTTVSILLTTCFQILYTTLFGGLTKFVFVRTGGNLWCCIILHALCNIMGFPGPSRLNLHFTVVDKKAGRISKLVSIWNKCYFALLVLGLISLKDTLQTLVGTPGYRITL</sequence>
<reference key="1">
    <citation type="journal article" date="1997" name="Nature">
        <title>The nucleotide sequence of Saccharomyces cerevisiae chromosome XIII.</title>
        <authorList>
            <person name="Bowman S."/>
            <person name="Churcher C.M."/>
            <person name="Badcock K."/>
            <person name="Brown D."/>
            <person name="Chillingworth T."/>
            <person name="Connor R."/>
            <person name="Dedman K."/>
            <person name="Devlin K."/>
            <person name="Gentles S."/>
            <person name="Hamlin N."/>
            <person name="Hunt S."/>
            <person name="Jagels K."/>
            <person name="Lye G."/>
            <person name="Moule S."/>
            <person name="Odell C."/>
            <person name="Pearson D."/>
            <person name="Rajandream M.A."/>
            <person name="Rice P."/>
            <person name="Skelton J."/>
            <person name="Walsh S.V."/>
            <person name="Whitehead S."/>
            <person name="Barrell B.G."/>
        </authorList>
    </citation>
    <scope>NUCLEOTIDE SEQUENCE [LARGE SCALE GENOMIC DNA]</scope>
    <source>
        <strain>ATCC 204508 / S288c</strain>
    </source>
</reference>
<reference key="2">
    <citation type="journal article" date="2014" name="G3 (Bethesda)">
        <title>The reference genome sequence of Saccharomyces cerevisiae: Then and now.</title>
        <authorList>
            <person name="Engel S.R."/>
            <person name="Dietrich F.S."/>
            <person name="Fisk D.G."/>
            <person name="Binkley G."/>
            <person name="Balakrishnan R."/>
            <person name="Costanzo M.C."/>
            <person name="Dwight S.S."/>
            <person name="Hitz B.C."/>
            <person name="Karra K."/>
            <person name="Nash R.S."/>
            <person name="Weng S."/>
            <person name="Wong E.D."/>
            <person name="Lloyd P."/>
            <person name="Skrzypek M.S."/>
            <person name="Miyasato S.R."/>
            <person name="Simison M."/>
            <person name="Cherry J.M."/>
        </authorList>
    </citation>
    <scope>GENOME REANNOTATION</scope>
    <source>
        <strain>ATCC 204508 / S288c</strain>
    </source>
</reference>
<reference key="3">
    <citation type="journal article" date="1997" name="Science">
        <title>Modulation of Ras and a-factor function by carboxyl-terminal proteolysis.</title>
        <authorList>
            <person name="Boyartchuk V.L."/>
            <person name="Ashby M.N."/>
            <person name="Rine J."/>
        </authorList>
    </citation>
    <scope>FUNCTION</scope>
</reference>
<reference key="4">
    <citation type="journal article" date="1998" name="Proc. Natl. Acad. Sci. U.S.A.">
        <title>Endoplasmic reticulum membrane localization of Rce1p and Ste24p, yeast proteases involved in carboxyl-terminal CAAX protein processing and amino-terminal a-factor cleavage.</title>
        <authorList>
            <person name="Schmidt W.K."/>
            <person name="Tam A."/>
            <person name="Fujimura-Kamada K."/>
            <person name="Michaelis S."/>
        </authorList>
    </citation>
    <scope>SUBCELLULAR LOCATION</scope>
</reference>
<reference key="5">
    <citation type="journal article" date="2000" name="Mol. Cell. Biol.">
        <title>The CaaX proteases, Afc1p and Rce1p, have overlapping but distinct substrate specificities.</title>
        <authorList>
            <person name="Trueblood C.E."/>
            <person name="Boyartchuk V.L."/>
            <person name="Picologlou E.A."/>
            <person name="Rozema D."/>
            <person name="Poulter C.D."/>
            <person name="Rine J."/>
        </authorList>
    </citation>
    <scope>FUNCTION</scope>
    <scope>CATALYTIC ACTIVITY</scope>
    <scope>SUBSTRATE SPECIFICITY</scope>
</reference>
<reference key="6">
    <citation type="journal article" date="2006" name="Proc. Natl. Acad. Sci. U.S.A.">
        <title>A global topology map of the Saccharomyces cerevisiae membrane proteome.</title>
        <authorList>
            <person name="Kim H."/>
            <person name="Melen K."/>
            <person name="Oesterberg M."/>
            <person name="von Heijne G."/>
        </authorList>
    </citation>
    <scope>TOPOLOGY [LARGE SCALE ANALYSIS]</scope>
    <source>
        <strain>ATCC 208353 / W303-1A</strain>
    </source>
</reference>
<accession>Q03530</accession>
<accession>D6W0A1</accession>
<feature type="chain" id="PRO_0000194834" description="CAAX prenyl protease 2">
    <location>
        <begin position="1"/>
        <end position="315"/>
    </location>
</feature>
<feature type="topological domain" description="Lumenal" evidence="2">
    <location>
        <begin position="1"/>
        <end position="3"/>
    </location>
</feature>
<feature type="transmembrane region" description="Helical" evidence="2">
    <location>
        <begin position="4"/>
        <end position="23"/>
    </location>
</feature>
<feature type="topological domain" description="Cytoplasmic" evidence="2">
    <location>
        <begin position="24"/>
        <end position="44"/>
    </location>
</feature>
<feature type="transmembrane region" description="Helical" evidence="2">
    <location>
        <begin position="45"/>
        <end position="65"/>
    </location>
</feature>
<feature type="topological domain" description="Lumenal" evidence="2">
    <location>
        <begin position="66"/>
        <end position="74"/>
    </location>
</feature>
<feature type="transmembrane region" description="Helical" evidence="2">
    <location>
        <begin position="75"/>
        <end position="95"/>
    </location>
</feature>
<feature type="topological domain" description="Cytoplasmic" evidence="2">
    <location>
        <begin position="96"/>
        <end position="105"/>
    </location>
</feature>
<feature type="transmembrane region" description="Helical" evidence="2">
    <location>
        <begin position="106"/>
        <end position="126"/>
    </location>
</feature>
<feature type="topological domain" description="Lumenal" evidence="2">
    <location>
        <begin position="127"/>
        <end position="148"/>
    </location>
</feature>
<feature type="transmembrane region" description="Helical" evidence="2">
    <location>
        <begin position="149"/>
        <end position="169"/>
    </location>
</feature>
<feature type="topological domain" description="Cytoplasmic" evidence="2">
    <location>
        <begin position="170"/>
        <end position="208"/>
    </location>
</feature>
<feature type="transmembrane region" description="Helical" evidence="2">
    <location>
        <begin position="209"/>
        <end position="229"/>
    </location>
</feature>
<feature type="topological domain" description="Lumenal" evidence="2">
    <location>
        <begin position="230"/>
        <end position="237"/>
    </location>
</feature>
<feature type="transmembrane region" description="Helical" evidence="2">
    <location>
        <begin position="238"/>
        <end position="258"/>
    </location>
</feature>
<feature type="topological domain" description="Cytoplasmic" evidence="2">
    <location>
        <begin position="259"/>
        <end position="275"/>
    </location>
</feature>
<feature type="transmembrane region" description="Helical" evidence="2">
    <location>
        <begin position="276"/>
        <end position="296"/>
    </location>
</feature>
<feature type="topological domain" description="Lumenal" evidence="2">
    <location>
        <begin position="297"/>
        <end position="315"/>
    </location>
</feature>
<feature type="active site" description="Proton donor/acceptor" evidence="1">
    <location>
        <position position="156"/>
    </location>
</feature>
<feature type="active site" description="Proton donor/acceptor" evidence="1">
    <location>
        <position position="194"/>
    </location>
</feature>
<feature type="site" description="Transition state stabilizer" evidence="1">
    <location>
        <position position="248"/>
    </location>
</feature>
<feature type="site" description="Transition state stabilizer" evidence="1">
    <location>
        <position position="252"/>
    </location>
</feature>